<gene>
    <name type="primary">TNP1</name>
</gene>
<proteinExistence type="evidence at protein level"/>
<protein>
    <recommendedName>
        <fullName>Spermatid nuclear transition protein 1</fullName>
        <shortName>Protein T</shortName>
        <shortName>STP-1</shortName>
        <shortName>TP-1</shortName>
    </recommendedName>
</protein>
<accession>P22613</accession>
<accession>W5QDS0</accession>
<organism>
    <name type="scientific">Ovis aries</name>
    <name type="common">Sheep</name>
    <dbReference type="NCBI Taxonomy" id="9940"/>
    <lineage>
        <taxon>Eukaryota</taxon>
        <taxon>Metazoa</taxon>
        <taxon>Chordata</taxon>
        <taxon>Craniata</taxon>
        <taxon>Vertebrata</taxon>
        <taxon>Euteleostomi</taxon>
        <taxon>Mammalia</taxon>
        <taxon>Eutheria</taxon>
        <taxon>Laurasiatheria</taxon>
        <taxon>Artiodactyla</taxon>
        <taxon>Ruminantia</taxon>
        <taxon>Pecora</taxon>
        <taxon>Bovidae</taxon>
        <taxon>Caprinae</taxon>
        <taxon>Ovis</taxon>
    </lineage>
</organism>
<keyword id="KW-0158">Chromosome</keyword>
<keyword id="KW-0217">Developmental protein</keyword>
<keyword id="KW-0221">Differentiation</keyword>
<keyword id="KW-0903">Direct protein sequencing</keyword>
<keyword id="KW-0238">DNA-binding</keyword>
<keyword id="KW-0544">Nucleosome core</keyword>
<keyword id="KW-0539">Nucleus</keyword>
<keyword id="KW-0597">Phosphoprotein</keyword>
<keyword id="KW-1185">Reference proteome</keyword>
<keyword id="KW-0744">Spermatogenesis</keyword>
<comment type="function">
    <text evidence="1">Plays a key role in the replacement of histones to protamine in the elongating spermatids of mammals. In condensing spermatids, loaded onto the nucleosomes, where it promotes the recruitment and processing of protamines, which are responsible for histone eviction.</text>
</comment>
<comment type="subcellular location">
    <subcellularLocation>
        <location evidence="1">Nucleus</location>
    </subcellularLocation>
    <subcellularLocation>
        <location evidence="1">Chromosome</location>
    </subcellularLocation>
    <text evidence="1">Loaded onto the nucleosomes of condensing spermatids.</text>
</comment>
<comment type="tissue specificity">
    <text>Testis.</text>
</comment>
<comment type="similarity">
    <text evidence="4">Belongs to the nuclear transition protein 1 family.</text>
</comment>
<reference key="1">
    <citation type="journal article" date="2010" name="Anim. Genet.">
        <title>The sheep genome reference sequence: a work in progress.</title>
        <authorList>
            <person name="Archibald A.L."/>
            <person name="Cockett N.E."/>
            <person name="Dalrymple B.P."/>
            <person name="Faraut T."/>
            <person name="Kijas J.W."/>
            <person name="Maddox J.F."/>
            <person name="McEwan J.C."/>
            <person name="Hutton Oddy V."/>
            <person name="Raadsma H.W."/>
            <person name="Wade C."/>
            <person name="Wang J."/>
            <person name="Wang W."/>
            <person name="Xun X."/>
        </authorList>
    </citation>
    <scope>NUCLEOTIDE SEQUENCE [LARGE SCALE GENOMIC DNA]</scope>
</reference>
<reference key="2">
    <citation type="journal article" date="1991" name="Eur. J. Biochem.">
        <title>Nuclear transition protein 1 from ram elongating spermatids. Mass spectrometric characterization, primary structure and phosphorylation sites of two variants.</title>
        <authorList>
            <person name="Chirat F."/>
            <person name="Martinage A."/>
            <person name="Briand G."/>
            <person name="Kouach M."/>
            <person name="van Dorsselaer A."/>
            <person name="Loir M."/>
        </authorList>
    </citation>
    <scope>PROTEIN SEQUENCE OF 2-55</scope>
    <scope>VARIANT GLY-28</scope>
    <scope>PHOSPHORYLATION AT SER-9; SER-36; SER-37 AND SER-40</scope>
    <scope>IDENTIFICATION BY MASS SPECTROMETRY</scope>
</reference>
<name>STP1_SHEEP</name>
<dbReference type="EMBL" id="AMGL01055949">
    <property type="status" value="NOT_ANNOTATED_CDS"/>
    <property type="molecule type" value="Genomic_DNA"/>
</dbReference>
<dbReference type="PIR" id="S16075">
    <property type="entry name" value="BGSH"/>
</dbReference>
<dbReference type="RefSeq" id="XP_004004966.1">
    <property type="nucleotide sequence ID" value="XM_004004917.6"/>
</dbReference>
<dbReference type="STRING" id="9940.ENSOARP00000020868"/>
<dbReference type="iPTMnet" id="P22613"/>
<dbReference type="PaxDb" id="9940-ENSOARP00000020868"/>
<dbReference type="Ensembl" id="ENSOART00020058276">
    <property type="protein sequence ID" value="ENSOARP00020059694"/>
    <property type="gene ID" value="ENSOARG00020031103"/>
</dbReference>
<dbReference type="Ensembl" id="ENSOART00025006808">
    <property type="protein sequence ID" value="ENSOARP00025003378"/>
    <property type="gene ID" value="ENSOARG00025004150"/>
</dbReference>
<dbReference type="Ensembl" id="ENSOART00220038382">
    <property type="protein sequence ID" value="ENSOARP00220020862"/>
    <property type="gene ID" value="ENSOARG00220023047"/>
</dbReference>
<dbReference type="Ensembl" id="ENSOART00225078101">
    <property type="protein sequence ID" value="ENSOARP00225040374"/>
    <property type="gene ID" value="ENSOARG00225047007"/>
</dbReference>
<dbReference type="Ensembl" id="ENSOART00260020850">
    <property type="protein sequence ID" value="ENSOARP00260010332"/>
    <property type="gene ID" value="ENSOARG00260012918"/>
</dbReference>
<dbReference type="GeneID" id="101108026"/>
<dbReference type="KEGG" id="oas:101108026"/>
<dbReference type="CTD" id="7141"/>
<dbReference type="eggNOG" id="ENOG502TKT1">
    <property type="taxonomic scope" value="Eukaryota"/>
</dbReference>
<dbReference type="OMA" id="FKSHGMR"/>
<dbReference type="Proteomes" id="UP000002356">
    <property type="component" value="Chromosome 2"/>
</dbReference>
<dbReference type="Bgee" id="ENSOARG00000019426">
    <property type="expression patterns" value="Expressed in testis and 24 other cell types or tissues"/>
</dbReference>
<dbReference type="GO" id="GO:0001673">
    <property type="term" value="C:male germ cell nucleus"/>
    <property type="evidence" value="ECO:0007669"/>
    <property type="project" value="TreeGrafter"/>
</dbReference>
<dbReference type="GO" id="GO:0000786">
    <property type="term" value="C:nucleosome"/>
    <property type="evidence" value="ECO:0000250"/>
    <property type="project" value="UniProtKB"/>
</dbReference>
<dbReference type="GO" id="GO:0005634">
    <property type="term" value="C:nucleus"/>
    <property type="evidence" value="ECO:0000250"/>
    <property type="project" value="UniProtKB"/>
</dbReference>
<dbReference type="GO" id="GO:0003677">
    <property type="term" value="F:DNA binding"/>
    <property type="evidence" value="ECO:0000250"/>
    <property type="project" value="UniProtKB"/>
</dbReference>
<dbReference type="GO" id="GO:0006338">
    <property type="term" value="P:chromatin remodeling"/>
    <property type="evidence" value="ECO:0000250"/>
    <property type="project" value="UniProtKB"/>
</dbReference>
<dbReference type="GO" id="GO:0030317">
    <property type="term" value="P:flagellated sperm motility"/>
    <property type="evidence" value="ECO:0000250"/>
    <property type="project" value="UniProtKB"/>
</dbReference>
<dbReference type="GO" id="GO:0031507">
    <property type="term" value="P:heterochromatin formation"/>
    <property type="evidence" value="ECO:0000250"/>
    <property type="project" value="UniProtKB"/>
</dbReference>
<dbReference type="GO" id="GO:0045892">
    <property type="term" value="P:negative regulation of DNA-templated transcription"/>
    <property type="evidence" value="ECO:0000250"/>
    <property type="project" value="UniProtKB"/>
</dbReference>
<dbReference type="GO" id="GO:0006337">
    <property type="term" value="P:nucleosome disassembly"/>
    <property type="evidence" value="ECO:0000250"/>
    <property type="project" value="UniProtKB"/>
</dbReference>
<dbReference type="GO" id="GO:0010954">
    <property type="term" value="P:positive regulation of protein processing"/>
    <property type="evidence" value="ECO:0000250"/>
    <property type="project" value="UniProtKB"/>
</dbReference>
<dbReference type="GO" id="GO:0019953">
    <property type="term" value="P:sexual reproduction"/>
    <property type="evidence" value="ECO:0000250"/>
    <property type="project" value="UniProtKB"/>
</dbReference>
<dbReference type="GO" id="GO:0000012">
    <property type="term" value="P:single strand break repair"/>
    <property type="evidence" value="ECO:0000250"/>
    <property type="project" value="UniProtKB"/>
</dbReference>
<dbReference type="GO" id="GO:0035092">
    <property type="term" value="P:sperm DNA condensation"/>
    <property type="evidence" value="ECO:0000250"/>
    <property type="project" value="UniProtKB"/>
</dbReference>
<dbReference type="GO" id="GO:0007286">
    <property type="term" value="P:spermatid development"/>
    <property type="evidence" value="ECO:0000250"/>
    <property type="project" value="UniProtKB"/>
</dbReference>
<dbReference type="GO" id="GO:0007290">
    <property type="term" value="P:spermatid nucleus elongation"/>
    <property type="evidence" value="ECO:0000250"/>
    <property type="project" value="UniProtKB"/>
</dbReference>
<dbReference type="InterPro" id="IPR001319">
    <property type="entry name" value="Nuclear_transition_prot1"/>
</dbReference>
<dbReference type="InterPro" id="IPR020062">
    <property type="entry name" value="Nuclear_transition_prot1_CS"/>
</dbReference>
<dbReference type="PANTHER" id="PTHR17486">
    <property type="entry name" value="SPERMATID NUCLEAR TRANSITION PROTEIN 1"/>
    <property type="match status" value="1"/>
</dbReference>
<dbReference type="PANTHER" id="PTHR17486:SF0">
    <property type="entry name" value="SPERMATID NUCLEAR TRANSITION PROTEIN 1"/>
    <property type="match status" value="1"/>
</dbReference>
<dbReference type="Pfam" id="PF02079">
    <property type="entry name" value="TP1"/>
    <property type="match status" value="1"/>
</dbReference>
<dbReference type="PROSITE" id="PS00541">
    <property type="entry name" value="TP1"/>
    <property type="match status" value="1"/>
</dbReference>
<sequence>MSTSRKLKSQGTRRGKNRTPHKGVKRGCSKRKYRKSSLKSRKRCDDANRNFRSHL</sequence>
<feature type="initiator methionine" description="Removed" evidence="3">
    <location>
        <position position="1"/>
    </location>
</feature>
<feature type="chain" id="PRO_0000191421" description="Spermatid nuclear transition protein 1" evidence="3">
    <location>
        <begin position="2"/>
        <end position="55"/>
    </location>
</feature>
<feature type="region of interest" description="Disordered" evidence="2">
    <location>
        <begin position="1"/>
        <end position="55"/>
    </location>
</feature>
<feature type="compositionally biased region" description="Basic residues" evidence="2">
    <location>
        <begin position="1"/>
        <end position="42"/>
    </location>
</feature>
<feature type="modified residue" description="Phosphoserine" evidence="3">
    <location>
        <position position="9"/>
    </location>
</feature>
<feature type="modified residue" description="Phosphoserine" evidence="3">
    <location>
        <position position="36"/>
    </location>
</feature>
<feature type="modified residue" description="Phosphoserine" evidence="3">
    <location>
        <position position="37"/>
    </location>
</feature>
<feature type="modified residue" description="Phosphoserine" evidence="3">
    <location>
        <position position="40"/>
    </location>
</feature>
<feature type="sequence variant" evidence="3">
    <original>C</original>
    <variation>G</variation>
    <location>
        <position position="28"/>
    </location>
</feature>
<evidence type="ECO:0000250" key="1">
    <source>
        <dbReference type="UniProtKB" id="P10856"/>
    </source>
</evidence>
<evidence type="ECO:0000256" key="2">
    <source>
        <dbReference type="SAM" id="MobiDB-lite"/>
    </source>
</evidence>
<evidence type="ECO:0000269" key="3">
    <source>
    </source>
</evidence>
<evidence type="ECO:0000305" key="4"/>